<protein>
    <recommendedName>
        <fullName evidence="1">Ribosomal RNA small subunit methyltransferase H</fullName>
        <ecNumber evidence="1">2.1.1.199</ecNumber>
    </recommendedName>
    <alternativeName>
        <fullName evidence="1">16S rRNA m(4)C1402 methyltransferase</fullName>
    </alternativeName>
    <alternativeName>
        <fullName evidence="1">rRNA (cytosine-N(4)-)-methyltransferase RsmH</fullName>
    </alternativeName>
</protein>
<comment type="function">
    <text evidence="1">Specifically methylates the N4 position of cytidine in position 1402 (C1402) of 16S rRNA.</text>
</comment>
<comment type="catalytic activity">
    <reaction evidence="1">
        <text>cytidine(1402) in 16S rRNA + S-adenosyl-L-methionine = N(4)-methylcytidine(1402) in 16S rRNA + S-adenosyl-L-homocysteine + H(+)</text>
        <dbReference type="Rhea" id="RHEA:42928"/>
        <dbReference type="Rhea" id="RHEA-COMP:10286"/>
        <dbReference type="Rhea" id="RHEA-COMP:10287"/>
        <dbReference type="ChEBI" id="CHEBI:15378"/>
        <dbReference type="ChEBI" id="CHEBI:57856"/>
        <dbReference type="ChEBI" id="CHEBI:59789"/>
        <dbReference type="ChEBI" id="CHEBI:74506"/>
        <dbReference type="ChEBI" id="CHEBI:82748"/>
        <dbReference type="EC" id="2.1.1.199"/>
    </reaction>
</comment>
<comment type="subcellular location">
    <subcellularLocation>
        <location evidence="1">Cytoplasm</location>
    </subcellularLocation>
</comment>
<comment type="similarity">
    <text evidence="1">Belongs to the methyltransferase superfamily. RsmH family.</text>
</comment>
<comment type="sequence caution" evidence="2">
    <conflict type="erroneous initiation">
        <sequence resource="EMBL-CDS" id="AAM80010"/>
    </conflict>
</comment>
<proteinExistence type="inferred from homology"/>
<feature type="chain" id="PRO_0000108722" description="Ribosomal RNA small subunit methyltransferase H">
    <location>
        <begin position="1"/>
        <end position="316"/>
    </location>
</feature>
<feature type="binding site" evidence="1">
    <location>
        <begin position="35"/>
        <end position="37"/>
    </location>
    <ligand>
        <name>S-adenosyl-L-methionine</name>
        <dbReference type="ChEBI" id="CHEBI:59789"/>
    </ligand>
</feature>
<feature type="binding site" evidence="1">
    <location>
        <position position="55"/>
    </location>
    <ligand>
        <name>S-adenosyl-L-methionine</name>
        <dbReference type="ChEBI" id="CHEBI:59789"/>
    </ligand>
</feature>
<feature type="binding site" evidence="1">
    <location>
        <position position="84"/>
    </location>
    <ligand>
        <name>S-adenosyl-L-methionine</name>
        <dbReference type="ChEBI" id="CHEBI:59789"/>
    </ligand>
</feature>
<feature type="binding site" evidence="1">
    <location>
        <position position="105"/>
    </location>
    <ligand>
        <name>S-adenosyl-L-methionine</name>
        <dbReference type="ChEBI" id="CHEBI:59789"/>
    </ligand>
</feature>
<feature type="binding site" evidence="1">
    <location>
        <position position="112"/>
    </location>
    <ligand>
        <name>S-adenosyl-L-methionine</name>
        <dbReference type="ChEBI" id="CHEBI:59789"/>
    </ligand>
</feature>
<reference key="1">
    <citation type="journal article" date="2002" name="Proc. Natl. Acad. Sci. U.S.A.">
        <title>Genome sequence of a serotype M3 strain of group A Streptococcus: phage-encoded toxins, the high-virulence phenotype, and clone emergence.</title>
        <authorList>
            <person name="Beres S.B."/>
            <person name="Sylva G.L."/>
            <person name="Barbian K.D."/>
            <person name="Lei B."/>
            <person name="Hoff J.S."/>
            <person name="Mammarella N.D."/>
            <person name="Liu M.-Y."/>
            <person name="Smoot J.C."/>
            <person name="Porcella S.F."/>
            <person name="Parkins L.D."/>
            <person name="Campbell D.S."/>
            <person name="Smith T.M."/>
            <person name="McCormick J.K."/>
            <person name="Leung D.Y.M."/>
            <person name="Schlievert P.M."/>
            <person name="Musser J.M."/>
        </authorList>
    </citation>
    <scope>NUCLEOTIDE SEQUENCE [LARGE SCALE GENOMIC DNA]</scope>
    <source>
        <strain>ATCC BAA-595 / MGAS315</strain>
    </source>
</reference>
<accession>P0DC36</accession>
<accession>P65432</accession>
<accession>Q99YJ9</accession>
<evidence type="ECO:0000255" key="1">
    <source>
        <dbReference type="HAMAP-Rule" id="MF_01007"/>
    </source>
</evidence>
<evidence type="ECO:0000305" key="2"/>
<gene>
    <name evidence="1" type="primary">rsmH</name>
    <name type="synonym">mraW</name>
    <name type="ordered locus">SpyM3_1403</name>
</gene>
<name>RSMH_STRP3</name>
<organism>
    <name type="scientific">Streptococcus pyogenes serotype M3 (strain ATCC BAA-595 / MGAS315)</name>
    <dbReference type="NCBI Taxonomy" id="198466"/>
    <lineage>
        <taxon>Bacteria</taxon>
        <taxon>Bacillati</taxon>
        <taxon>Bacillota</taxon>
        <taxon>Bacilli</taxon>
        <taxon>Lactobacillales</taxon>
        <taxon>Streptococcaceae</taxon>
        <taxon>Streptococcus</taxon>
    </lineage>
</organism>
<dbReference type="EC" id="2.1.1.199" evidence="1"/>
<dbReference type="EMBL" id="AE014074">
    <property type="protein sequence ID" value="AAM80010.1"/>
    <property type="status" value="ALT_INIT"/>
    <property type="molecule type" value="Genomic_DNA"/>
</dbReference>
<dbReference type="RefSeq" id="WP_002988893.1">
    <property type="nucleotide sequence ID" value="NC_004070.1"/>
</dbReference>
<dbReference type="SMR" id="P0DC36"/>
<dbReference type="KEGG" id="spg:SpyM3_1403"/>
<dbReference type="HOGENOM" id="CLU_038422_2_0_9"/>
<dbReference type="Proteomes" id="UP000000564">
    <property type="component" value="Chromosome"/>
</dbReference>
<dbReference type="GO" id="GO:0005737">
    <property type="term" value="C:cytoplasm"/>
    <property type="evidence" value="ECO:0007669"/>
    <property type="project" value="UniProtKB-SubCell"/>
</dbReference>
<dbReference type="GO" id="GO:0071424">
    <property type="term" value="F:rRNA (cytosine-N4-)-methyltransferase activity"/>
    <property type="evidence" value="ECO:0007669"/>
    <property type="project" value="UniProtKB-UniRule"/>
</dbReference>
<dbReference type="GO" id="GO:0070475">
    <property type="term" value="P:rRNA base methylation"/>
    <property type="evidence" value="ECO:0007669"/>
    <property type="project" value="UniProtKB-UniRule"/>
</dbReference>
<dbReference type="FunFam" id="1.10.150.170:FF:000001">
    <property type="entry name" value="Ribosomal RNA small subunit methyltransferase H"/>
    <property type="match status" value="1"/>
</dbReference>
<dbReference type="Gene3D" id="1.10.150.170">
    <property type="entry name" value="Putative methyltransferase TM0872, insert domain"/>
    <property type="match status" value="1"/>
</dbReference>
<dbReference type="Gene3D" id="3.40.50.150">
    <property type="entry name" value="Vaccinia Virus protein VP39"/>
    <property type="match status" value="1"/>
</dbReference>
<dbReference type="HAMAP" id="MF_01007">
    <property type="entry name" value="16SrRNA_methyltr_H"/>
    <property type="match status" value="1"/>
</dbReference>
<dbReference type="InterPro" id="IPR002903">
    <property type="entry name" value="RsmH"/>
</dbReference>
<dbReference type="InterPro" id="IPR023397">
    <property type="entry name" value="SAM-dep_MeTrfase_MraW_recog"/>
</dbReference>
<dbReference type="InterPro" id="IPR029063">
    <property type="entry name" value="SAM-dependent_MTases_sf"/>
</dbReference>
<dbReference type="NCBIfam" id="TIGR00006">
    <property type="entry name" value="16S rRNA (cytosine(1402)-N(4))-methyltransferase RsmH"/>
    <property type="match status" value="1"/>
</dbReference>
<dbReference type="PANTHER" id="PTHR11265:SF0">
    <property type="entry name" value="12S RRNA N4-METHYLCYTIDINE METHYLTRANSFERASE"/>
    <property type="match status" value="1"/>
</dbReference>
<dbReference type="PANTHER" id="PTHR11265">
    <property type="entry name" value="S-ADENOSYL-METHYLTRANSFERASE MRAW"/>
    <property type="match status" value="1"/>
</dbReference>
<dbReference type="Pfam" id="PF01795">
    <property type="entry name" value="Methyltransf_5"/>
    <property type="match status" value="1"/>
</dbReference>
<dbReference type="PIRSF" id="PIRSF004486">
    <property type="entry name" value="MraW"/>
    <property type="match status" value="1"/>
</dbReference>
<dbReference type="SUPFAM" id="SSF81799">
    <property type="entry name" value="Putative methyltransferase TM0872, insert domain"/>
    <property type="match status" value="1"/>
</dbReference>
<dbReference type="SUPFAM" id="SSF53335">
    <property type="entry name" value="S-adenosyl-L-methionine-dependent methyltransferases"/>
    <property type="match status" value="1"/>
</dbReference>
<keyword id="KW-0963">Cytoplasm</keyword>
<keyword id="KW-0489">Methyltransferase</keyword>
<keyword id="KW-0698">rRNA processing</keyword>
<keyword id="KW-0949">S-adenosyl-L-methionine</keyword>
<keyword id="KW-0808">Transferase</keyword>
<sequence length="316" mass="35688">MTKEFHHVTVLLHETVDMLDIKPDGIYVDATLGGSGHSAYLLSKLGEEGHLYCFDQDQKAIDNAQVTLKSYIDKGQVTFIKDNFRHLKARLTALGVDEIDGILYDLGVSSPQLDERERGFSYKQDAPLDMRMDRQSLLTAYEVVNTYPFNDLVKIFFKYGEDKFSKQIARKIEQARAIKPIETTTELAELIKAAKPAKELKKKGHPAKQIFQAIRIEVNDELGAADESIQDAMELLALDGRISVITFHSLEDRLTKQLFKEASTVDVPKGLPLIPEDMKPKFELVSRKPILPSHSELTANKRAHSAKLRVAKKIRK</sequence>